<reference key="1">
    <citation type="journal article" date="2001" name="Lancet">
        <title>Whole genome sequencing of meticillin-resistant Staphylococcus aureus.</title>
        <authorList>
            <person name="Kuroda M."/>
            <person name="Ohta T."/>
            <person name="Uchiyama I."/>
            <person name="Baba T."/>
            <person name="Yuzawa H."/>
            <person name="Kobayashi I."/>
            <person name="Cui L."/>
            <person name="Oguchi A."/>
            <person name="Aoki K."/>
            <person name="Nagai Y."/>
            <person name="Lian J.-Q."/>
            <person name="Ito T."/>
            <person name="Kanamori M."/>
            <person name="Matsumaru H."/>
            <person name="Maruyama A."/>
            <person name="Murakami H."/>
            <person name="Hosoyama A."/>
            <person name="Mizutani-Ui Y."/>
            <person name="Takahashi N.K."/>
            <person name="Sawano T."/>
            <person name="Inoue R."/>
            <person name="Kaito C."/>
            <person name="Sekimizu K."/>
            <person name="Hirakawa H."/>
            <person name="Kuhara S."/>
            <person name="Goto S."/>
            <person name="Yabuzaki J."/>
            <person name="Kanehisa M."/>
            <person name="Yamashita A."/>
            <person name="Oshima K."/>
            <person name="Furuya K."/>
            <person name="Yoshino C."/>
            <person name="Shiba T."/>
            <person name="Hattori M."/>
            <person name="Ogasawara N."/>
            <person name="Hayashi H."/>
            <person name="Hiramatsu K."/>
        </authorList>
    </citation>
    <scope>NUCLEOTIDE SEQUENCE [LARGE SCALE GENOMIC DNA]</scope>
    <source>
        <strain>N315</strain>
    </source>
</reference>
<reference key="2">
    <citation type="submission" date="2007-10" db="UniProtKB">
        <title>Shotgun proteomic analysis of total and membrane protein extracts of S. aureus strain N315.</title>
        <authorList>
            <person name="Vaezzadeh A.R."/>
            <person name="Deshusses J."/>
            <person name="Lescuyer P."/>
            <person name="Hochstrasser D.F."/>
        </authorList>
    </citation>
    <scope>IDENTIFICATION BY MASS SPECTROMETRY [LARGE SCALE ANALYSIS]</scope>
    <source>
        <strain>N315</strain>
    </source>
</reference>
<sequence length="335" mass="38596">MTHNIHDNISQWMKSNEETPIVMSSRIRLARNLENHVHPLMYATENDGFRVINEVQDALPNFELMRLDQMDQQSKMKMVAKHLISPELIKQPAAAVLVNDDESLSVMINEEDHIRIQAMGTDTTLQALYNQASSIDDELDRSLDISYDEQLGYLTTCPTNIGTGMRASVMLHLPGLSIMKRMTRIAQTINRFGYTIRGIYGEGSQVYGHTYQVSNQLTLGKSELEIIETLTEVVNQIIHDEKQIRQKLDTYNQLETQDRVFRSLGILQNCRMITMEEASYRLSEVKLGIDLNYIELQNFKFNELMVAIQSPFLLDEEDDKSVKEKRADILREHIK</sequence>
<evidence type="ECO:0000255" key="1">
    <source>
        <dbReference type="HAMAP-Rule" id="MF_00602"/>
    </source>
</evidence>
<name>MCSB_STAAN</name>
<protein>
    <recommendedName>
        <fullName evidence="1">Protein-arginine kinase</fullName>
        <ecNumber evidence="1">2.7.14.1</ecNumber>
    </recommendedName>
</protein>
<accession>P65206</accession>
<accession>Q99W79</accession>
<feature type="chain" id="PRO_0000212030" description="Protein-arginine kinase">
    <location>
        <begin position="1"/>
        <end position="335"/>
    </location>
</feature>
<feature type="domain" description="Phosphagen kinase C-terminal" evidence="1">
    <location>
        <begin position="21"/>
        <end position="244"/>
    </location>
</feature>
<feature type="binding site" evidence="1">
    <location>
        <begin position="24"/>
        <end position="28"/>
    </location>
    <ligand>
        <name>ATP</name>
        <dbReference type="ChEBI" id="CHEBI:30616"/>
    </ligand>
</feature>
<feature type="binding site" evidence="1">
    <location>
        <position position="82"/>
    </location>
    <ligand>
        <name>ATP</name>
        <dbReference type="ChEBI" id="CHEBI:30616"/>
    </ligand>
</feature>
<feature type="binding site" evidence="1">
    <location>
        <position position="115"/>
    </location>
    <ligand>
        <name>ATP</name>
        <dbReference type="ChEBI" id="CHEBI:30616"/>
    </ligand>
</feature>
<feature type="binding site" evidence="1">
    <location>
        <begin position="166"/>
        <end position="170"/>
    </location>
    <ligand>
        <name>ATP</name>
        <dbReference type="ChEBI" id="CHEBI:30616"/>
    </ligand>
</feature>
<feature type="binding site" evidence="1">
    <location>
        <begin position="197"/>
        <end position="202"/>
    </location>
    <ligand>
        <name>ATP</name>
        <dbReference type="ChEBI" id="CHEBI:30616"/>
    </ligand>
</feature>
<comment type="function">
    <text evidence="1">Catalyzes the specific phosphorylation of arginine residues in proteins.</text>
</comment>
<comment type="catalytic activity">
    <reaction evidence="1">
        <text>L-arginyl-[protein] + ATP = N(omega)-phospho-L-arginyl-[protein] + ADP + H(+)</text>
        <dbReference type="Rhea" id="RHEA:43384"/>
        <dbReference type="Rhea" id="RHEA-COMP:10532"/>
        <dbReference type="Rhea" id="RHEA-COMP:10533"/>
        <dbReference type="ChEBI" id="CHEBI:15378"/>
        <dbReference type="ChEBI" id="CHEBI:29965"/>
        <dbReference type="ChEBI" id="CHEBI:30616"/>
        <dbReference type="ChEBI" id="CHEBI:83226"/>
        <dbReference type="ChEBI" id="CHEBI:456216"/>
        <dbReference type="EC" id="2.7.14.1"/>
    </reaction>
</comment>
<comment type="similarity">
    <text evidence="1">Belongs to the ATP:guanido phosphotransferase family.</text>
</comment>
<gene>
    <name evidence="1" type="primary">mcsB</name>
    <name type="ordered locus">SA0482</name>
</gene>
<dbReference type="EC" id="2.7.14.1" evidence="1"/>
<dbReference type="EMBL" id="BA000018">
    <property type="protein sequence ID" value="BAB41712.1"/>
    <property type="molecule type" value="Genomic_DNA"/>
</dbReference>
<dbReference type="PIR" id="E89819">
    <property type="entry name" value="E89819"/>
</dbReference>
<dbReference type="RefSeq" id="WP_000149502.1">
    <property type="nucleotide sequence ID" value="NC_002745.2"/>
</dbReference>
<dbReference type="SMR" id="P65206"/>
<dbReference type="EnsemblBacteria" id="BAB41712">
    <property type="protein sequence ID" value="BAB41712"/>
    <property type="gene ID" value="BAB41712"/>
</dbReference>
<dbReference type="KEGG" id="sau:SA0482"/>
<dbReference type="HOGENOM" id="CLU_066591_1_0_9"/>
<dbReference type="GO" id="GO:0005615">
    <property type="term" value="C:extracellular space"/>
    <property type="evidence" value="ECO:0007669"/>
    <property type="project" value="TreeGrafter"/>
</dbReference>
<dbReference type="GO" id="GO:0005524">
    <property type="term" value="F:ATP binding"/>
    <property type="evidence" value="ECO:0007669"/>
    <property type="project" value="UniProtKB-KW"/>
</dbReference>
<dbReference type="GO" id="GO:0004111">
    <property type="term" value="F:creatine kinase activity"/>
    <property type="evidence" value="ECO:0007669"/>
    <property type="project" value="InterPro"/>
</dbReference>
<dbReference type="GO" id="GO:0004672">
    <property type="term" value="F:protein kinase activity"/>
    <property type="evidence" value="ECO:0007669"/>
    <property type="project" value="UniProtKB-UniRule"/>
</dbReference>
<dbReference type="GO" id="GO:0046314">
    <property type="term" value="P:phosphocreatine biosynthetic process"/>
    <property type="evidence" value="ECO:0007669"/>
    <property type="project" value="InterPro"/>
</dbReference>
<dbReference type="CDD" id="cd07930">
    <property type="entry name" value="bacterial_phosphagen_kinase"/>
    <property type="match status" value="1"/>
</dbReference>
<dbReference type="FunFam" id="3.30.590.10:FF:000007">
    <property type="entry name" value="Protein-arginine kinase"/>
    <property type="match status" value="1"/>
</dbReference>
<dbReference type="Gene3D" id="3.30.590.10">
    <property type="entry name" value="Glutamine synthetase/guanido kinase, catalytic domain"/>
    <property type="match status" value="1"/>
</dbReference>
<dbReference type="HAMAP" id="MF_00602">
    <property type="entry name" value="Prot_Arg_kinase"/>
    <property type="match status" value="1"/>
</dbReference>
<dbReference type="InterPro" id="IPR023660">
    <property type="entry name" value="Arg_Kinase"/>
</dbReference>
<dbReference type="InterPro" id="IPR000749">
    <property type="entry name" value="ATP-guanido_PTrfase"/>
</dbReference>
<dbReference type="InterPro" id="IPR022415">
    <property type="entry name" value="ATP-guanido_PTrfase_AS"/>
</dbReference>
<dbReference type="InterPro" id="IPR022414">
    <property type="entry name" value="ATP-guanido_PTrfase_cat"/>
</dbReference>
<dbReference type="InterPro" id="IPR014746">
    <property type="entry name" value="Gln_synth/guanido_kin_cat_dom"/>
</dbReference>
<dbReference type="NCBIfam" id="NF002193">
    <property type="entry name" value="PRK01059.1-3"/>
    <property type="match status" value="1"/>
</dbReference>
<dbReference type="PANTHER" id="PTHR11547:SF38">
    <property type="entry name" value="ARGININE KINASE 1-RELATED"/>
    <property type="match status" value="1"/>
</dbReference>
<dbReference type="PANTHER" id="PTHR11547">
    <property type="entry name" value="ARGININE OR CREATINE KINASE"/>
    <property type="match status" value="1"/>
</dbReference>
<dbReference type="Pfam" id="PF00217">
    <property type="entry name" value="ATP-gua_Ptrans"/>
    <property type="match status" value="1"/>
</dbReference>
<dbReference type="SUPFAM" id="SSF55931">
    <property type="entry name" value="Glutamine synthetase/guanido kinase"/>
    <property type="match status" value="1"/>
</dbReference>
<dbReference type="PROSITE" id="PS00112">
    <property type="entry name" value="PHOSPHAGEN_KINASE"/>
    <property type="match status" value="1"/>
</dbReference>
<dbReference type="PROSITE" id="PS51510">
    <property type="entry name" value="PHOSPHAGEN_KINASE_C"/>
    <property type="match status" value="1"/>
</dbReference>
<proteinExistence type="evidence at protein level"/>
<keyword id="KW-0067">ATP-binding</keyword>
<keyword id="KW-0418">Kinase</keyword>
<keyword id="KW-0547">Nucleotide-binding</keyword>
<keyword id="KW-0808">Transferase</keyword>
<organism>
    <name type="scientific">Staphylococcus aureus (strain N315)</name>
    <dbReference type="NCBI Taxonomy" id="158879"/>
    <lineage>
        <taxon>Bacteria</taxon>
        <taxon>Bacillati</taxon>
        <taxon>Bacillota</taxon>
        <taxon>Bacilli</taxon>
        <taxon>Bacillales</taxon>
        <taxon>Staphylococcaceae</taxon>
        <taxon>Staphylococcus</taxon>
    </lineage>
</organism>